<protein>
    <recommendedName>
        <fullName evidence="13">Multiple inositol polyphosphate phosphatase 1</fullName>
        <ecNumber evidence="6">3.1.3.62</ecNumber>
    </recommendedName>
    <alternativeName>
        <fullName evidence="1">2,3-bisphosphoglycerate 3-phosphatase</fullName>
        <shortName evidence="1">2,3-BPG phosphatase</shortName>
        <ecNumber evidence="1">3.1.3.80</ecNumber>
    </alternativeName>
    <alternativeName>
        <fullName evidence="10">Band 17</fullName>
    </alternativeName>
    <alternativeName>
        <fullName evidence="11">Histidine phosphatase of the endoplasmic reticulum 1</fullName>
        <shortName evidence="11">HiPER1</shortName>
    </alternativeName>
</protein>
<gene>
    <name type="primary">MINPP1</name>
</gene>
<sequence length="448" mass="50200">MAPRRAACLLPLLVAVASAGLGGYFGTKSRYEEVNPHLAEDPLSLGPHAAASRLPAACAPLQLRAVLRHGTRYPTAGQIRRLAELHGRLRRAAAPSCPAAAALAAWPMWYEESLDRLAPRGRRDMEHLARRLAARFPALFAARRRLALASSSKHRCLQSGAAFRRGLGPSLSLGADETEIEVNDALMRFFDHCDKFVAFVEDNDTAMYQVNAFKEGPEMRKVLEKVASALCLPASELNADLVQVAFLTCSYELAIKNVTSPWCSLFSEEDAKVLEYLNDLKQYWKRGYGYDINSRSSCILFQDIFQQLDKAVDESRSSKPISSPLIVQVGHAETLQPLLALMGYFKDAEPLQANNYIRQAHRKFRSGRIVPYAANLVFVLYHCEQKTSKEEYQVQMLLNEKPMLFHHSNETISTYADLKSYYKDILQNCHFEEVCELPKVNGTVADEL</sequence>
<comment type="function">
    <text evidence="1 6">Multiple inositol polyphosphate phosphatase that hydrolyzes 1D-myo-inositol 1,3,4,5,6-pentakisphosphate (InsP5[2OH]) and 1D-myo-inositol hexakisphosphate (InsP6) to a range of less phosphorylated inositol phosphates. This regulates the availability of these various small molecule second messengers and metal chelators which control many aspects of cell physiology (PubMed:16759730). Has a weak in vitro activity towards 1D-myo-inositol 1,4,5-trisphosphate which is unlikely to be physiologically relevant. By regulating intracellular inositol polyphosphates pools, which act as metal chelators, it may control the availability of intracellular calcium and iron, which are important for proper neuronal development and homeostasis. May have a dual substrate specificity, and function as a 2,3-bisphosphoglycerate 3-phosphatase hydrolyzing 2,3-bisphosphoglycerate to 2-phosphoglycerate. 2,3-bisphosphoglycerate (BPG) is formed as part of the Rapoport-Luebering glycolytic bypass and is a regulator of systemic oxygen homeostasis as the major allosteric effector of hemoglobin (By similarity).</text>
</comment>
<comment type="catalytic activity">
    <reaction evidence="1">
        <text>1D-myo-inositol hexakisphosphate + H2O = 1D-myo-inositol 1,2,4,5,6-pentakisphosphate + phosphate</text>
        <dbReference type="Rhea" id="RHEA:16989"/>
        <dbReference type="ChEBI" id="CHEBI:15377"/>
        <dbReference type="ChEBI" id="CHEBI:43474"/>
        <dbReference type="ChEBI" id="CHEBI:57798"/>
        <dbReference type="ChEBI" id="CHEBI:58130"/>
        <dbReference type="EC" id="3.1.3.62"/>
    </reaction>
    <physiologicalReaction direction="left-to-right" evidence="1">
        <dbReference type="Rhea" id="RHEA:16990"/>
    </physiologicalReaction>
</comment>
<comment type="catalytic activity">
    <reaction evidence="1">
        <text>1D-myo-inositol 1,2,4,5,6-pentakisphosphate + H2O = 1D-myo-inositol 1,2,5,6-tetrakisphosphate + phosphate</text>
        <dbReference type="Rhea" id="RHEA:77115"/>
        <dbReference type="ChEBI" id="CHEBI:15377"/>
        <dbReference type="ChEBI" id="CHEBI:43474"/>
        <dbReference type="ChEBI" id="CHEBI:57798"/>
        <dbReference type="ChEBI" id="CHEBI:195535"/>
        <dbReference type="EC" id="3.1.3.62"/>
    </reaction>
    <physiologicalReaction direction="left-to-right" evidence="1">
        <dbReference type="Rhea" id="RHEA:77116"/>
    </physiologicalReaction>
</comment>
<comment type="catalytic activity">
    <reaction evidence="1">
        <text>1D-myo-inositol 1,2,5,6-tetrakisphosphate + H2O = 1D-myo-inositol 1,2,6-trisphosphate + phosphate</text>
        <dbReference type="Rhea" id="RHEA:77119"/>
        <dbReference type="ChEBI" id="CHEBI:15377"/>
        <dbReference type="ChEBI" id="CHEBI:43474"/>
        <dbReference type="ChEBI" id="CHEBI:195535"/>
        <dbReference type="ChEBI" id="CHEBI:195537"/>
        <dbReference type="EC" id="3.1.3.62"/>
    </reaction>
    <physiologicalReaction direction="left-to-right" evidence="1">
        <dbReference type="Rhea" id="RHEA:77120"/>
    </physiologicalReaction>
</comment>
<comment type="catalytic activity">
    <reaction evidence="1">
        <text>1D-myo-inositol 1,2,6-trisphosphate + H2O = 1D-myo-inositol 1,2-bisphosphate + phosphate</text>
        <dbReference type="Rhea" id="RHEA:77131"/>
        <dbReference type="ChEBI" id="CHEBI:15377"/>
        <dbReference type="ChEBI" id="CHEBI:43474"/>
        <dbReference type="ChEBI" id="CHEBI:195537"/>
        <dbReference type="ChEBI" id="CHEBI:195539"/>
        <dbReference type="EC" id="3.1.3.62"/>
    </reaction>
    <physiologicalReaction direction="left-to-right" evidence="1">
        <dbReference type="Rhea" id="RHEA:77132"/>
    </physiologicalReaction>
</comment>
<comment type="catalytic activity">
    <reaction evidence="1">
        <text>1D-myo-inositol 1,2-bisphosphate + H2O = 1D-myo-inositol 2-phosphate + phosphate</text>
        <dbReference type="Rhea" id="RHEA:77135"/>
        <dbReference type="ChEBI" id="CHEBI:15377"/>
        <dbReference type="ChEBI" id="CHEBI:43474"/>
        <dbReference type="ChEBI" id="CHEBI:84142"/>
        <dbReference type="ChEBI" id="CHEBI:195539"/>
        <dbReference type="EC" id="3.1.3.62"/>
    </reaction>
    <physiologicalReaction direction="left-to-right" evidence="1">
        <dbReference type="Rhea" id="RHEA:77136"/>
    </physiologicalReaction>
</comment>
<comment type="catalytic activity">
    <reaction evidence="1">
        <text>1D-myo-inositol hexakisphosphate + H2O = 1D-myo-inositol 1,2,3,5,6-pentakisphosphate + phosphate</text>
        <dbReference type="Rhea" id="RHEA:20960"/>
        <dbReference type="ChEBI" id="CHEBI:15377"/>
        <dbReference type="ChEBI" id="CHEBI:43474"/>
        <dbReference type="ChEBI" id="CHEBI:58130"/>
        <dbReference type="ChEBI" id="CHEBI:58747"/>
    </reaction>
    <physiologicalReaction direction="left-to-right" evidence="1">
        <dbReference type="Rhea" id="RHEA:20961"/>
    </physiologicalReaction>
</comment>
<comment type="catalytic activity">
    <reaction evidence="1">
        <text>1D-myo-inositol 1,2,3,5,6-pentakisphosphate + H2O = 1D-myo-inositol 1,2,3,6-tetrakisphosphate + phosphate</text>
        <dbReference type="Rhea" id="RHEA:77111"/>
        <dbReference type="ChEBI" id="CHEBI:15377"/>
        <dbReference type="ChEBI" id="CHEBI:43474"/>
        <dbReference type="ChEBI" id="CHEBI:58747"/>
        <dbReference type="ChEBI" id="CHEBI:195534"/>
    </reaction>
    <physiologicalReaction direction="left-to-right" evidence="1">
        <dbReference type="Rhea" id="RHEA:77112"/>
    </physiologicalReaction>
</comment>
<comment type="catalytic activity">
    <reaction evidence="1">
        <text>1D-myo-inositol 1,2,3,6-tetrakisphosphate + H2O = 1D-myo-inositol 1,2,3-trisphosphate + phosphate</text>
        <dbReference type="Rhea" id="RHEA:77123"/>
        <dbReference type="ChEBI" id="CHEBI:15377"/>
        <dbReference type="ChEBI" id="CHEBI:43474"/>
        <dbReference type="ChEBI" id="CHEBI:195534"/>
        <dbReference type="ChEBI" id="CHEBI:195536"/>
    </reaction>
    <physiologicalReaction direction="left-to-right" evidence="1">
        <dbReference type="Rhea" id="RHEA:77124"/>
    </physiologicalReaction>
</comment>
<comment type="catalytic activity">
    <reaction evidence="1">
        <text>1D-myo-inositol 1,2,3-trisphosphate + H2O = 1D-myo-inositol 2,3-bisphosphate + phosphate</text>
        <dbReference type="Rhea" id="RHEA:77127"/>
        <dbReference type="ChEBI" id="CHEBI:15377"/>
        <dbReference type="ChEBI" id="CHEBI:43474"/>
        <dbReference type="ChEBI" id="CHEBI:195536"/>
        <dbReference type="ChEBI" id="CHEBI:195538"/>
    </reaction>
    <physiologicalReaction direction="left-to-right" evidence="1">
        <dbReference type="Rhea" id="RHEA:77128"/>
    </physiologicalReaction>
</comment>
<comment type="catalytic activity">
    <reaction evidence="1">
        <text>1D-myo-inositol 2,3-bisphosphate + H2O = 1D-myo-inositol 2-phosphate + phosphate</text>
        <dbReference type="Rhea" id="RHEA:77139"/>
        <dbReference type="ChEBI" id="CHEBI:15377"/>
        <dbReference type="ChEBI" id="CHEBI:43474"/>
        <dbReference type="ChEBI" id="CHEBI:84142"/>
        <dbReference type="ChEBI" id="CHEBI:195538"/>
    </reaction>
    <physiologicalReaction direction="left-to-right" evidence="1">
        <dbReference type="Rhea" id="RHEA:77140"/>
    </physiologicalReaction>
</comment>
<comment type="catalytic activity">
    <reaction evidence="1">
        <text>1D-myo-inositol 1,3,4,5,6-pentakisphosphate + H2O = 1D-myo-inositol 1,4,5,6-tetrakisphosphate + phosphate</text>
        <dbReference type="Rhea" id="RHEA:77143"/>
        <dbReference type="ChEBI" id="CHEBI:15377"/>
        <dbReference type="ChEBI" id="CHEBI:43474"/>
        <dbReference type="ChEBI" id="CHEBI:57627"/>
        <dbReference type="ChEBI" id="CHEBI:57733"/>
    </reaction>
    <physiologicalReaction direction="left-to-right" evidence="1">
        <dbReference type="Rhea" id="RHEA:77144"/>
    </physiologicalReaction>
</comment>
<comment type="catalytic activity">
    <reaction evidence="1">
        <text>1D-myo-inositol 1,4,5,6-tetrakisphosphate + H2O = 1D-myo-inositol 1,4,5-trisphosphate + phosphate</text>
        <dbReference type="Rhea" id="RHEA:77147"/>
        <dbReference type="ChEBI" id="CHEBI:15377"/>
        <dbReference type="ChEBI" id="CHEBI:43474"/>
        <dbReference type="ChEBI" id="CHEBI:57627"/>
        <dbReference type="ChEBI" id="CHEBI:203600"/>
    </reaction>
    <physiologicalReaction direction="left-to-right" evidence="1">
        <dbReference type="Rhea" id="RHEA:77148"/>
    </physiologicalReaction>
</comment>
<comment type="catalytic activity">
    <reaction evidence="1">
        <text>(2R)-2,3-bisphosphoglycerate + H2O = (2R)-2-phosphoglycerate + phosphate</text>
        <dbReference type="Rhea" id="RHEA:27381"/>
        <dbReference type="ChEBI" id="CHEBI:15377"/>
        <dbReference type="ChEBI" id="CHEBI:43474"/>
        <dbReference type="ChEBI" id="CHEBI:58248"/>
        <dbReference type="ChEBI" id="CHEBI:58289"/>
        <dbReference type="EC" id="3.1.3.80"/>
    </reaction>
    <physiologicalReaction direction="left-to-right" evidence="1">
        <dbReference type="Rhea" id="RHEA:27382"/>
    </physiologicalReaction>
</comment>
<comment type="biophysicochemical properties">
    <kinetics>
        <KM evidence="6">140 uM for inositol hexakisphosphate</KM>
        <Vmax evidence="6">715.0 nmol/min/mg enzyme with inositol hexakisphosphate as substrate</Vmax>
    </kinetics>
    <phDependence>
        <text evidence="6">Optimum pH is 4.5-7.5.</text>
    </phDependence>
</comment>
<comment type="subcellular location">
    <subcellularLocation>
        <location evidence="8">Endoplasmic reticulum lumen</location>
    </subcellularLocation>
    <subcellularLocation>
        <location evidence="1">Secreted</location>
    </subcellularLocation>
    <subcellularLocation>
        <location evidence="2">Cell membrane</location>
    </subcellularLocation>
    <text evidence="2">Also associated with the plasma membrane in erythrocytes.</text>
</comment>
<comment type="tissue specificity">
    <text evidence="7 8">Present in growth plate chondrocytes but not detectable in articular chondrocytes (at protein level) (PubMed:9472008). Spatially restricted to chondrocytes in the lower portion of the proliferative zone and the upper portion of the hypertrophic zone in the growth plate of long bones (at protein level) (PubMed:9472008). Weakly expressed in kidney, liver, lung, skin and spleen, and not detected in brain, heart and muscle (PubMed:8660956).</text>
</comment>
<comment type="induction">
    <text evidence="8">Repressed by parathyroid hormone-related protein PTHLH/PTHRP.</text>
</comment>
<comment type="PTM">
    <text evidence="6 8">N-glycosylated.</text>
</comment>
<comment type="miscellaneous">
    <text evidence="9">Monogastric animals cannot hydrolyze dietary inositol hexakisphosphate (InsP6) which makes up the bulk of organic phosphates in soybean, grains and other plant seeds which are the primary source of animal feed. The high activity of the chicken protein toward InsP6 offers a genetic strategy for improving InsP6 digestion in poultry and reducing the pollution that results from high phosphate content in manure.</text>
</comment>
<comment type="similarity">
    <text evidence="12">Belongs to the histidine acid phosphatase family. MINPP1 subfamily.</text>
</comment>
<evidence type="ECO:0000250" key="1">
    <source>
        <dbReference type="UniProtKB" id="Q9UNW1"/>
    </source>
</evidence>
<evidence type="ECO:0000250" key="2">
    <source>
        <dbReference type="UniProtKB" id="Q9Z2L6"/>
    </source>
</evidence>
<evidence type="ECO:0000255" key="3"/>
<evidence type="ECO:0000255" key="4">
    <source>
        <dbReference type="PROSITE-ProRule" id="PRU00498"/>
    </source>
</evidence>
<evidence type="ECO:0000255" key="5">
    <source>
        <dbReference type="PROSITE-ProRule" id="PRU10138"/>
    </source>
</evidence>
<evidence type="ECO:0000269" key="6">
    <source>
    </source>
</evidence>
<evidence type="ECO:0000269" key="7">
    <source>
    </source>
</evidence>
<evidence type="ECO:0000269" key="8">
    <source>
    </source>
</evidence>
<evidence type="ECO:0000303" key="9">
    <source>
    </source>
</evidence>
<evidence type="ECO:0000303" key="10">
    <source>
    </source>
</evidence>
<evidence type="ECO:0000303" key="11">
    <source>
    </source>
</evidence>
<evidence type="ECO:0000305" key="12"/>
<evidence type="ECO:0000305" key="13">
    <source>
    </source>
</evidence>
<evidence type="ECO:0000312" key="14">
    <source>
        <dbReference type="EMBL" id="AAB97100.1"/>
    </source>
</evidence>
<evidence type="ECO:0000312" key="15">
    <source>
        <dbReference type="Proteomes" id="UP000000539"/>
    </source>
</evidence>
<dbReference type="EC" id="3.1.3.62" evidence="6"/>
<dbReference type="EC" id="3.1.3.80" evidence="1"/>
<dbReference type="EMBL" id="U59421">
    <property type="protein sequence ID" value="AAB97100.1"/>
    <property type="molecule type" value="mRNA"/>
</dbReference>
<dbReference type="EMBL" id="AADN03005023">
    <property type="status" value="NOT_ANNOTATED_CDS"/>
    <property type="molecule type" value="Genomic_DNA"/>
</dbReference>
<dbReference type="RefSeq" id="NP_989975.1">
    <property type="nucleotide sequence ID" value="NM_204644.1"/>
</dbReference>
<dbReference type="SMR" id="F1NPQ2"/>
<dbReference type="FunCoup" id="F1NPQ2">
    <property type="interactions" value="769"/>
</dbReference>
<dbReference type="STRING" id="9031.ENSGALP00000005852"/>
<dbReference type="GlyCosmos" id="F1NPQ2">
    <property type="glycosylation" value="4 sites, No reported glycans"/>
</dbReference>
<dbReference type="GlyGen" id="F1NPQ2">
    <property type="glycosylation" value="4 sites"/>
</dbReference>
<dbReference type="PaxDb" id="9031-ENSGALP00000005852"/>
<dbReference type="GeneID" id="395356"/>
<dbReference type="KEGG" id="gga:395356"/>
<dbReference type="CTD" id="9562"/>
<dbReference type="VEuPathDB" id="HostDB:geneid_395356"/>
<dbReference type="eggNOG" id="KOG1382">
    <property type="taxonomic scope" value="Eukaryota"/>
</dbReference>
<dbReference type="HOGENOM" id="CLU_029165_3_1_1"/>
<dbReference type="InParanoid" id="F1NPQ2"/>
<dbReference type="OrthoDB" id="6509975at2759"/>
<dbReference type="SABIO-RK" id="F1NPQ2"/>
<dbReference type="PRO" id="PR:F1NPQ2"/>
<dbReference type="Proteomes" id="UP000000539">
    <property type="component" value="Unassembled WGS sequence"/>
</dbReference>
<dbReference type="GO" id="GO:0005788">
    <property type="term" value="C:endoplasmic reticulum lumen"/>
    <property type="evidence" value="ECO:0000314"/>
    <property type="project" value="UniProtKB"/>
</dbReference>
<dbReference type="GO" id="GO:0005615">
    <property type="term" value="C:extracellular space"/>
    <property type="evidence" value="ECO:0000250"/>
    <property type="project" value="UniProtKB"/>
</dbReference>
<dbReference type="GO" id="GO:0005886">
    <property type="term" value="C:plasma membrane"/>
    <property type="evidence" value="ECO:0000250"/>
    <property type="project" value="UniProtKB"/>
</dbReference>
<dbReference type="GO" id="GO:0016158">
    <property type="term" value="F:3-phytase activity"/>
    <property type="evidence" value="ECO:0007669"/>
    <property type="project" value="RHEA"/>
</dbReference>
<dbReference type="GO" id="GO:0008707">
    <property type="term" value="F:4-phytase activity"/>
    <property type="evidence" value="ECO:0007669"/>
    <property type="project" value="RHEA"/>
</dbReference>
<dbReference type="GO" id="GO:0003993">
    <property type="term" value="F:acid phosphatase activity"/>
    <property type="evidence" value="ECO:0000318"/>
    <property type="project" value="GO_Central"/>
</dbReference>
<dbReference type="GO" id="GO:0034417">
    <property type="term" value="F:bisphosphoglycerate 3-phosphatase activity"/>
    <property type="evidence" value="ECO:0007669"/>
    <property type="project" value="UniProtKB-EC"/>
</dbReference>
<dbReference type="GO" id="GO:0016312">
    <property type="term" value="F:inositol bisphosphate phosphatase activity"/>
    <property type="evidence" value="ECO:0000250"/>
    <property type="project" value="UniProtKB"/>
</dbReference>
<dbReference type="GO" id="GO:0052827">
    <property type="term" value="F:inositol pentakisphosphate phosphatase activity"/>
    <property type="evidence" value="ECO:0000250"/>
    <property type="project" value="UniProtKB"/>
</dbReference>
<dbReference type="GO" id="GO:0052745">
    <property type="term" value="F:inositol phosphate phosphatase activity"/>
    <property type="evidence" value="ECO:0000318"/>
    <property type="project" value="GO_Central"/>
</dbReference>
<dbReference type="GO" id="GO:0046030">
    <property type="term" value="F:inositol trisphosphate phosphatase activity"/>
    <property type="evidence" value="ECO:0000250"/>
    <property type="project" value="UniProtKB"/>
</dbReference>
<dbReference type="GO" id="GO:0030351">
    <property type="term" value="F:inositol-1,3,4,5,6-pentakisphosphate 3-phosphatase activity"/>
    <property type="evidence" value="ECO:0000250"/>
    <property type="project" value="UniProtKB"/>
</dbReference>
<dbReference type="GO" id="GO:0030352">
    <property type="term" value="F:inositol-1,4,5,6-tetrakisphosphate 6-phosphatase activity"/>
    <property type="evidence" value="ECO:0000250"/>
    <property type="project" value="UniProtKB"/>
</dbReference>
<dbReference type="GO" id="GO:0004446">
    <property type="term" value="F:inositol-hexakisphosphate phosphatase activity"/>
    <property type="evidence" value="ECO:0000250"/>
    <property type="project" value="UniProtKB"/>
</dbReference>
<dbReference type="GO" id="GO:0030003">
    <property type="term" value="P:intracellular monoatomic cation homeostasis"/>
    <property type="evidence" value="ECO:0000250"/>
    <property type="project" value="UniProtKB"/>
</dbReference>
<dbReference type="CDD" id="cd07061">
    <property type="entry name" value="HP_HAP_like"/>
    <property type="match status" value="1"/>
</dbReference>
<dbReference type="FunFam" id="3.40.50.1240:FF:000014">
    <property type="entry name" value="Multiple inositol polyphosphate phosphatase 1"/>
    <property type="match status" value="1"/>
</dbReference>
<dbReference type="Gene3D" id="3.40.50.1240">
    <property type="entry name" value="Phosphoglycerate mutase-like"/>
    <property type="match status" value="1"/>
</dbReference>
<dbReference type="InterPro" id="IPR000560">
    <property type="entry name" value="His_Pase_clade-2"/>
</dbReference>
<dbReference type="InterPro" id="IPR029033">
    <property type="entry name" value="His_PPase_superfam"/>
</dbReference>
<dbReference type="InterPro" id="IPR016274">
    <property type="entry name" value="Histidine_acid_Pase_euk"/>
</dbReference>
<dbReference type="PANTHER" id="PTHR20963:SF8">
    <property type="entry name" value="MULTIPLE INOSITOL POLYPHOSPHATE PHOSPHATASE 1"/>
    <property type="match status" value="1"/>
</dbReference>
<dbReference type="PANTHER" id="PTHR20963">
    <property type="entry name" value="MULTIPLE INOSITOL POLYPHOSPHATE PHOSPHATASE-RELATED"/>
    <property type="match status" value="1"/>
</dbReference>
<dbReference type="Pfam" id="PF00328">
    <property type="entry name" value="His_Phos_2"/>
    <property type="match status" value="1"/>
</dbReference>
<dbReference type="PIRSF" id="PIRSF000894">
    <property type="entry name" value="Acid_phosphatase"/>
    <property type="match status" value="1"/>
</dbReference>
<dbReference type="SUPFAM" id="SSF53254">
    <property type="entry name" value="Phosphoglycerate mutase-like"/>
    <property type="match status" value="1"/>
</dbReference>
<dbReference type="PROSITE" id="PS00014">
    <property type="entry name" value="ER_TARGET"/>
    <property type="match status" value="1"/>
</dbReference>
<proteinExistence type="evidence at protein level"/>
<name>MINP1_CHICK</name>
<accession>F1NPQ2</accession>
<accession>Q92170</accession>
<feature type="signal peptide" evidence="3">
    <location>
        <begin position="1"/>
        <end position="19"/>
    </location>
</feature>
<feature type="chain" id="PRO_0000437140" description="Multiple inositol polyphosphate phosphatase 1" evidence="3">
    <location>
        <begin position="20"/>
        <end position="448"/>
    </location>
</feature>
<feature type="short sequence motif" description="Prevents secretion from ER" evidence="5">
    <location>
        <begin position="445"/>
        <end position="448"/>
    </location>
</feature>
<feature type="active site" evidence="2">
    <location>
        <position position="69"/>
    </location>
</feature>
<feature type="glycosylation site" description="N-linked (GlcNAc...) asparagine" evidence="4">
    <location>
        <position position="203"/>
    </location>
</feature>
<feature type="glycosylation site" description="N-linked (GlcNAc...) asparagine" evidence="4">
    <location>
        <position position="257"/>
    </location>
</feature>
<feature type="glycosylation site" description="N-linked (GlcNAc...) asparagine" evidence="4">
    <location>
        <position position="409"/>
    </location>
</feature>
<feature type="glycosylation site" description="N-linked (GlcNAc...) asparagine" evidence="4">
    <location>
        <position position="441"/>
    </location>
</feature>
<feature type="mutagenesis site" description="Loss of 96% of activity towards InsP6." evidence="6">
    <original>T</original>
    <variation>G</variation>
    <location>
        <position position="27"/>
    </location>
</feature>
<feature type="mutagenesis site" description="Two-fold greater substrate affinity and doubling of catalytic activity." evidence="6">
    <original>Q</original>
    <variation>A</variation>
    <location>
        <position position="78"/>
    </location>
</feature>
<feature type="sequence conflict" description="In Ref. 1; AAB97100." evidence="12" ref="1">
    <original>R</original>
    <variation>C</variation>
    <location>
        <position position="4"/>
    </location>
</feature>
<feature type="sequence conflict" description="In Ref. 1; AAB97100." evidence="12" ref="1">
    <original>S</original>
    <variation>A</variation>
    <location>
        <position position="52"/>
    </location>
</feature>
<feature type="sequence conflict" description="In Ref. 1; AAB97100." evidence="12" ref="1">
    <original>AVL</original>
    <variation>RVV</variation>
    <location>
        <begin position="65"/>
        <end position="67"/>
    </location>
</feature>
<feature type="sequence conflict" description="In Ref. 1; AAB97100." evidence="12" ref="1">
    <original>D</original>
    <variation>DG</variation>
    <location>
        <position position="115"/>
    </location>
</feature>
<reference evidence="14" key="1">
    <citation type="journal article" date="1996" name="Exp. Cell Res.">
        <title>Identification and characterization of a unique chondrocyte gene involved in transition to hypertrophy.</title>
        <authorList>
            <person name="Reynolds S.D."/>
            <person name="Johnston C."/>
            <person name="Leboy P.S."/>
            <person name="O'Keefe R.J."/>
            <person name="Puzas J.E."/>
            <person name="Rosier R.N."/>
            <person name="Reynolds P.R."/>
        </authorList>
    </citation>
    <scope>NUCLEOTIDE SEQUENCE [MRNA]</scope>
    <scope>TISSUE SPECIFICITY</scope>
</reference>
<reference evidence="15" key="2">
    <citation type="journal article" date="2004" name="Nature">
        <title>Sequence and comparative analysis of the chicken genome provide unique perspectives on vertebrate evolution.</title>
        <authorList>
            <person name="Hillier L.W."/>
            <person name="Miller W."/>
            <person name="Birney E."/>
            <person name="Warren W."/>
            <person name="Hardison R.C."/>
            <person name="Ponting C.P."/>
            <person name="Bork P."/>
            <person name="Burt D.W."/>
            <person name="Groenen M.A.M."/>
            <person name="Delany M.E."/>
            <person name="Dodgson J.B."/>
            <person name="Chinwalla A.T."/>
            <person name="Cliften P.F."/>
            <person name="Clifton S.W."/>
            <person name="Delehaunty K.D."/>
            <person name="Fronick C."/>
            <person name="Fulton R.S."/>
            <person name="Graves T.A."/>
            <person name="Kremitzki C."/>
            <person name="Layman D."/>
            <person name="Magrini V."/>
            <person name="McPherson J.D."/>
            <person name="Miner T.L."/>
            <person name="Minx P."/>
            <person name="Nash W.E."/>
            <person name="Nhan M.N."/>
            <person name="Nelson J.O."/>
            <person name="Oddy L.G."/>
            <person name="Pohl C.S."/>
            <person name="Randall-Maher J."/>
            <person name="Smith S.M."/>
            <person name="Wallis J.W."/>
            <person name="Yang S.-P."/>
            <person name="Romanov M.N."/>
            <person name="Rondelli C.M."/>
            <person name="Paton B."/>
            <person name="Smith J."/>
            <person name="Morrice D."/>
            <person name="Daniels L."/>
            <person name="Tempest H.G."/>
            <person name="Robertson L."/>
            <person name="Masabanda J.S."/>
            <person name="Griffin D.K."/>
            <person name="Vignal A."/>
            <person name="Fillon V."/>
            <person name="Jacobbson L."/>
            <person name="Kerje S."/>
            <person name="Andersson L."/>
            <person name="Crooijmans R.P."/>
            <person name="Aerts J."/>
            <person name="van der Poel J.J."/>
            <person name="Ellegren H."/>
            <person name="Caldwell R.B."/>
            <person name="Hubbard S.J."/>
            <person name="Grafham D.V."/>
            <person name="Kierzek A.M."/>
            <person name="McLaren S.R."/>
            <person name="Overton I.M."/>
            <person name="Arakawa H."/>
            <person name="Beattie K.J."/>
            <person name="Bezzubov Y."/>
            <person name="Boardman P.E."/>
            <person name="Bonfield J.K."/>
            <person name="Croning M.D.R."/>
            <person name="Davies R.M."/>
            <person name="Francis M.D."/>
            <person name="Humphray S.J."/>
            <person name="Scott C.E."/>
            <person name="Taylor R.G."/>
            <person name="Tickle C."/>
            <person name="Brown W.R.A."/>
            <person name="Rogers J."/>
            <person name="Buerstedde J.-M."/>
            <person name="Wilson S.A."/>
            <person name="Stubbs L."/>
            <person name="Ovcharenko I."/>
            <person name="Gordon L."/>
            <person name="Lucas S."/>
            <person name="Miller M.M."/>
            <person name="Inoko H."/>
            <person name="Shiina T."/>
            <person name="Kaufman J."/>
            <person name="Salomonsen J."/>
            <person name="Skjoedt K."/>
            <person name="Wong G.K.-S."/>
            <person name="Wang J."/>
            <person name="Liu B."/>
            <person name="Wang J."/>
            <person name="Yu J."/>
            <person name="Yang H."/>
            <person name="Nefedov M."/>
            <person name="Koriabine M."/>
            <person name="Dejong P.J."/>
            <person name="Goodstadt L."/>
            <person name="Webber C."/>
            <person name="Dickens N.J."/>
            <person name="Letunic I."/>
            <person name="Suyama M."/>
            <person name="Torrents D."/>
            <person name="von Mering C."/>
            <person name="Zdobnov E.M."/>
            <person name="Makova K."/>
            <person name="Nekrutenko A."/>
            <person name="Elnitski L."/>
            <person name="Eswara P."/>
            <person name="King D.C."/>
            <person name="Yang S.-P."/>
            <person name="Tyekucheva S."/>
            <person name="Radakrishnan A."/>
            <person name="Harris R.S."/>
            <person name="Chiaromonte F."/>
            <person name="Taylor J."/>
            <person name="He J."/>
            <person name="Rijnkels M."/>
            <person name="Griffiths-Jones S."/>
            <person name="Ureta-Vidal A."/>
            <person name="Hoffman M.M."/>
            <person name="Severin J."/>
            <person name="Searle S.M.J."/>
            <person name="Law A.S."/>
            <person name="Speed D."/>
            <person name="Waddington D."/>
            <person name="Cheng Z."/>
            <person name="Tuzun E."/>
            <person name="Eichler E."/>
            <person name="Bao Z."/>
            <person name="Flicek P."/>
            <person name="Shteynberg D.D."/>
            <person name="Brent M.R."/>
            <person name="Bye J.M."/>
            <person name="Huckle E.J."/>
            <person name="Chatterji S."/>
            <person name="Dewey C."/>
            <person name="Pachter L."/>
            <person name="Kouranov A."/>
            <person name="Mourelatos Z."/>
            <person name="Hatzigeorgiou A.G."/>
            <person name="Paterson A.H."/>
            <person name="Ivarie R."/>
            <person name="Brandstrom M."/>
            <person name="Axelsson E."/>
            <person name="Backstrom N."/>
            <person name="Berlin S."/>
            <person name="Webster M.T."/>
            <person name="Pourquie O."/>
            <person name="Reymond A."/>
            <person name="Ucla C."/>
            <person name="Antonarakis S.E."/>
            <person name="Long M."/>
            <person name="Emerson J.J."/>
            <person name="Betran E."/>
            <person name="Dupanloup I."/>
            <person name="Kaessmann H."/>
            <person name="Hinrichs A.S."/>
            <person name="Bejerano G."/>
            <person name="Furey T.S."/>
            <person name="Harte R.A."/>
            <person name="Raney B."/>
            <person name="Siepel A."/>
            <person name="Kent W.J."/>
            <person name="Haussler D."/>
            <person name="Eyras E."/>
            <person name="Castelo R."/>
            <person name="Abril J.F."/>
            <person name="Castellano S."/>
            <person name="Camara F."/>
            <person name="Parra G."/>
            <person name="Guigo R."/>
            <person name="Bourque G."/>
            <person name="Tesler G."/>
            <person name="Pevzner P.A."/>
            <person name="Smit A."/>
            <person name="Fulton L.A."/>
            <person name="Mardis E.R."/>
            <person name="Wilson R.K."/>
        </authorList>
    </citation>
    <scope>NUCLEOTIDE SEQUENCE [LARGE SCALE GENOMIC DNA]</scope>
    <source>
        <strain evidence="15">Red jungle fowl</strain>
    </source>
</reference>
<reference evidence="12" key="3">
    <citation type="journal article" date="1998" name="J. Cell Sci.">
        <title>HiPER1, a phosphatase of the endoplasmic reticulum with a role in chondrocyte maturation.</title>
        <authorList>
            <person name="Romano P.R."/>
            <person name="Wang J."/>
            <person name="O'Keefe R.J."/>
            <person name="Puzas J.E."/>
            <person name="Rosier R.N."/>
            <person name="Reynolds P.R."/>
        </authorList>
    </citation>
    <scope>SUBCELLULAR LOCATION</scope>
    <scope>TISSUE SPECIFICITY</scope>
    <scope>INDUCTION</scope>
    <scope>GLYCOSYLATION</scope>
</reference>
<reference evidence="12" key="4">
    <citation type="journal article" date="2006" name="J. Biotechnol.">
        <title>Avian multiple inositol polyphosphate phosphatase is an active phytase that can be engineered to help ameliorate the planet's 'phosphate crisis'.</title>
        <authorList>
            <person name="Cho J."/>
            <person name="Choi K."/>
            <person name="Darden T."/>
            <person name="Reynolds P.R."/>
            <person name="Petitte J.N."/>
            <person name="Shears S.B."/>
        </authorList>
    </citation>
    <scope>FUNCTION</scope>
    <scope>CATALYTIC ACTIVITY</scope>
    <scope>BIOPHYSICOCHEMICAL PROPERTIES</scope>
    <scope>GLYCOSYLATION</scope>
    <scope>MISCELLANEOUS</scope>
    <scope>MUTAGENESIS OF THR-27 AND GLN-78</scope>
</reference>
<organism evidence="15">
    <name type="scientific">Gallus gallus</name>
    <name type="common">Chicken</name>
    <dbReference type="NCBI Taxonomy" id="9031"/>
    <lineage>
        <taxon>Eukaryota</taxon>
        <taxon>Metazoa</taxon>
        <taxon>Chordata</taxon>
        <taxon>Craniata</taxon>
        <taxon>Vertebrata</taxon>
        <taxon>Euteleostomi</taxon>
        <taxon>Archelosauria</taxon>
        <taxon>Archosauria</taxon>
        <taxon>Dinosauria</taxon>
        <taxon>Saurischia</taxon>
        <taxon>Theropoda</taxon>
        <taxon>Coelurosauria</taxon>
        <taxon>Aves</taxon>
        <taxon>Neognathae</taxon>
        <taxon>Galloanserae</taxon>
        <taxon>Galliformes</taxon>
        <taxon>Phasianidae</taxon>
        <taxon>Phasianinae</taxon>
        <taxon>Gallus</taxon>
    </lineage>
</organism>
<keyword id="KW-1003">Cell membrane</keyword>
<keyword id="KW-0256">Endoplasmic reticulum</keyword>
<keyword id="KW-0325">Glycoprotein</keyword>
<keyword id="KW-0378">Hydrolase</keyword>
<keyword id="KW-0472">Membrane</keyword>
<keyword id="KW-1185">Reference proteome</keyword>
<keyword id="KW-0964">Secreted</keyword>
<keyword id="KW-0732">Signal</keyword>